<accession>B8G9X1</accession>
<comment type="function">
    <text evidence="2">Involved in base excision repair of DNA damaged by oxidation or by mutagenic agents. Acts as a DNA glycosylase that recognizes and removes damaged bases. Has a preference for oxidized purines, such as 7,8-dihydro-8-oxoguanine (8-oxoG). Has AP (apurinic/apyrimidinic) lyase activity and introduces nicks in the DNA strand. Cleaves the DNA backbone by beta-delta elimination to generate a single-strand break at the site of the removed base with both 3'- and 5'-phosphates.</text>
</comment>
<comment type="catalytic activity">
    <reaction evidence="2">
        <text>Hydrolysis of DNA containing ring-opened 7-methylguanine residues, releasing 2,6-diamino-4-hydroxy-5-(N-methyl)formamidopyrimidine.</text>
        <dbReference type="EC" id="3.2.2.23"/>
    </reaction>
</comment>
<comment type="catalytic activity">
    <reaction evidence="2">
        <text>2'-deoxyribonucleotide-(2'-deoxyribose 5'-phosphate)-2'-deoxyribonucleotide-DNA = a 3'-end 2'-deoxyribonucleotide-(2,3-dehydro-2,3-deoxyribose 5'-phosphate)-DNA + a 5'-end 5'-phospho-2'-deoxyribonucleoside-DNA + H(+)</text>
        <dbReference type="Rhea" id="RHEA:66592"/>
        <dbReference type="Rhea" id="RHEA-COMP:13180"/>
        <dbReference type="Rhea" id="RHEA-COMP:16897"/>
        <dbReference type="Rhea" id="RHEA-COMP:17067"/>
        <dbReference type="ChEBI" id="CHEBI:15378"/>
        <dbReference type="ChEBI" id="CHEBI:136412"/>
        <dbReference type="ChEBI" id="CHEBI:157695"/>
        <dbReference type="ChEBI" id="CHEBI:167181"/>
        <dbReference type="EC" id="4.2.99.18"/>
    </reaction>
</comment>
<comment type="cofactor">
    <cofactor evidence="2">
        <name>Zn(2+)</name>
        <dbReference type="ChEBI" id="CHEBI:29105"/>
    </cofactor>
    <text evidence="2">Binds 1 zinc ion per subunit.</text>
</comment>
<comment type="subunit">
    <text evidence="2">Monomer.</text>
</comment>
<comment type="similarity">
    <text evidence="2">Belongs to the FPG family.</text>
</comment>
<organism>
    <name type="scientific">Chloroflexus aggregans (strain MD-66 / DSM 9485)</name>
    <dbReference type="NCBI Taxonomy" id="326427"/>
    <lineage>
        <taxon>Bacteria</taxon>
        <taxon>Bacillati</taxon>
        <taxon>Chloroflexota</taxon>
        <taxon>Chloroflexia</taxon>
        <taxon>Chloroflexales</taxon>
        <taxon>Chloroflexineae</taxon>
        <taxon>Chloroflexaceae</taxon>
        <taxon>Chloroflexus</taxon>
    </lineage>
</organism>
<dbReference type="EC" id="3.2.2.23" evidence="2"/>
<dbReference type="EC" id="4.2.99.18" evidence="2"/>
<dbReference type="EMBL" id="CP001337">
    <property type="protein sequence ID" value="ACL24486.1"/>
    <property type="molecule type" value="Genomic_DNA"/>
</dbReference>
<dbReference type="RefSeq" id="WP_015940345.1">
    <property type="nucleotide sequence ID" value="NC_011831.1"/>
</dbReference>
<dbReference type="SMR" id="B8G9X1"/>
<dbReference type="STRING" id="326427.Cagg_1584"/>
<dbReference type="KEGG" id="cag:Cagg_1584"/>
<dbReference type="eggNOG" id="COG0266">
    <property type="taxonomic scope" value="Bacteria"/>
</dbReference>
<dbReference type="HOGENOM" id="CLU_038423_1_2_0"/>
<dbReference type="OrthoDB" id="9800855at2"/>
<dbReference type="Proteomes" id="UP000002508">
    <property type="component" value="Chromosome"/>
</dbReference>
<dbReference type="GO" id="GO:0034039">
    <property type="term" value="F:8-oxo-7,8-dihydroguanine DNA N-glycosylase activity"/>
    <property type="evidence" value="ECO:0007669"/>
    <property type="project" value="TreeGrafter"/>
</dbReference>
<dbReference type="GO" id="GO:0140078">
    <property type="term" value="F:class I DNA-(apurinic or apyrimidinic site) endonuclease activity"/>
    <property type="evidence" value="ECO:0007669"/>
    <property type="project" value="UniProtKB-EC"/>
</dbReference>
<dbReference type="GO" id="GO:0003684">
    <property type="term" value="F:damaged DNA binding"/>
    <property type="evidence" value="ECO:0007669"/>
    <property type="project" value="InterPro"/>
</dbReference>
<dbReference type="GO" id="GO:0008270">
    <property type="term" value="F:zinc ion binding"/>
    <property type="evidence" value="ECO:0007669"/>
    <property type="project" value="UniProtKB-UniRule"/>
</dbReference>
<dbReference type="GO" id="GO:0006284">
    <property type="term" value="P:base-excision repair"/>
    <property type="evidence" value="ECO:0007669"/>
    <property type="project" value="InterPro"/>
</dbReference>
<dbReference type="CDD" id="cd08966">
    <property type="entry name" value="EcFpg-like_N"/>
    <property type="match status" value="1"/>
</dbReference>
<dbReference type="FunFam" id="1.10.8.50:FF:000003">
    <property type="entry name" value="Formamidopyrimidine-DNA glycosylase"/>
    <property type="match status" value="1"/>
</dbReference>
<dbReference type="Gene3D" id="1.10.8.50">
    <property type="match status" value="1"/>
</dbReference>
<dbReference type="Gene3D" id="3.20.190.10">
    <property type="entry name" value="MutM-like, N-terminal"/>
    <property type="match status" value="1"/>
</dbReference>
<dbReference type="HAMAP" id="MF_00103">
    <property type="entry name" value="Fapy_DNA_glycosyl"/>
    <property type="match status" value="1"/>
</dbReference>
<dbReference type="InterPro" id="IPR015886">
    <property type="entry name" value="DNA_glyclase/AP_lyase_DNA-bd"/>
</dbReference>
<dbReference type="InterPro" id="IPR020629">
    <property type="entry name" value="Formamido-pyr_DNA_Glyclase"/>
</dbReference>
<dbReference type="InterPro" id="IPR012319">
    <property type="entry name" value="FPG_cat"/>
</dbReference>
<dbReference type="InterPro" id="IPR035937">
    <property type="entry name" value="MutM-like_N-ter"/>
</dbReference>
<dbReference type="InterPro" id="IPR010979">
    <property type="entry name" value="Ribosomal_uS13-like_H2TH"/>
</dbReference>
<dbReference type="InterPro" id="IPR000214">
    <property type="entry name" value="Znf_DNA_glyclase/AP_lyase"/>
</dbReference>
<dbReference type="InterPro" id="IPR010663">
    <property type="entry name" value="Znf_FPG/IleRS"/>
</dbReference>
<dbReference type="NCBIfam" id="TIGR00577">
    <property type="entry name" value="fpg"/>
    <property type="match status" value="1"/>
</dbReference>
<dbReference type="NCBIfam" id="NF002211">
    <property type="entry name" value="PRK01103.1"/>
    <property type="match status" value="1"/>
</dbReference>
<dbReference type="PANTHER" id="PTHR22993">
    <property type="entry name" value="FORMAMIDOPYRIMIDINE-DNA GLYCOSYLASE"/>
    <property type="match status" value="1"/>
</dbReference>
<dbReference type="PANTHER" id="PTHR22993:SF9">
    <property type="entry name" value="FORMAMIDOPYRIMIDINE-DNA GLYCOSYLASE"/>
    <property type="match status" value="1"/>
</dbReference>
<dbReference type="Pfam" id="PF01149">
    <property type="entry name" value="Fapy_DNA_glyco"/>
    <property type="match status" value="1"/>
</dbReference>
<dbReference type="Pfam" id="PF06831">
    <property type="entry name" value="H2TH"/>
    <property type="match status" value="1"/>
</dbReference>
<dbReference type="Pfam" id="PF06827">
    <property type="entry name" value="zf-FPG_IleRS"/>
    <property type="match status" value="1"/>
</dbReference>
<dbReference type="SMART" id="SM00898">
    <property type="entry name" value="Fapy_DNA_glyco"/>
    <property type="match status" value="1"/>
</dbReference>
<dbReference type="SMART" id="SM01232">
    <property type="entry name" value="H2TH"/>
    <property type="match status" value="1"/>
</dbReference>
<dbReference type="SUPFAM" id="SSF57716">
    <property type="entry name" value="Glucocorticoid receptor-like (DNA-binding domain)"/>
    <property type="match status" value="1"/>
</dbReference>
<dbReference type="SUPFAM" id="SSF81624">
    <property type="entry name" value="N-terminal domain of MutM-like DNA repair proteins"/>
    <property type="match status" value="1"/>
</dbReference>
<dbReference type="SUPFAM" id="SSF46946">
    <property type="entry name" value="S13-like H2TH domain"/>
    <property type="match status" value="1"/>
</dbReference>
<dbReference type="PROSITE" id="PS51068">
    <property type="entry name" value="FPG_CAT"/>
    <property type="match status" value="1"/>
</dbReference>
<dbReference type="PROSITE" id="PS51066">
    <property type="entry name" value="ZF_FPG_2"/>
    <property type="match status" value="1"/>
</dbReference>
<protein>
    <recommendedName>
        <fullName evidence="2">Formamidopyrimidine-DNA glycosylase</fullName>
        <shortName evidence="2">Fapy-DNA glycosylase</shortName>
        <ecNumber evidence="2">3.2.2.23</ecNumber>
    </recommendedName>
    <alternativeName>
        <fullName evidence="2">DNA-(apurinic or apyrimidinic site) lyase MutM</fullName>
        <shortName evidence="2">AP lyase MutM</shortName>
        <ecNumber evidence="2">4.2.99.18</ecNumber>
    </alternativeName>
</protein>
<evidence type="ECO:0000250" key="1"/>
<evidence type="ECO:0000255" key="2">
    <source>
        <dbReference type="HAMAP-Rule" id="MF_00103"/>
    </source>
</evidence>
<proteinExistence type="inferred from homology"/>
<name>FPG_CHLAD</name>
<gene>
    <name evidence="2" type="primary">mutM</name>
    <name evidence="2" type="synonym">fpg</name>
    <name type="ordered locus">Cagg_1584</name>
</gene>
<keyword id="KW-0227">DNA damage</keyword>
<keyword id="KW-0234">DNA repair</keyword>
<keyword id="KW-0238">DNA-binding</keyword>
<keyword id="KW-0326">Glycosidase</keyword>
<keyword id="KW-0378">Hydrolase</keyword>
<keyword id="KW-0456">Lyase</keyword>
<keyword id="KW-0479">Metal-binding</keyword>
<keyword id="KW-0511">Multifunctional enzyme</keyword>
<keyword id="KW-0862">Zinc</keyword>
<keyword id="KW-0863">Zinc-finger</keyword>
<feature type="initiator methionine" description="Removed" evidence="1">
    <location>
        <position position="1"/>
    </location>
</feature>
<feature type="chain" id="PRO_1000118883" description="Formamidopyrimidine-DNA glycosylase">
    <location>
        <begin position="2"/>
        <end position="275"/>
    </location>
</feature>
<feature type="zinc finger region" description="FPG-type" evidence="2">
    <location>
        <begin position="238"/>
        <end position="272"/>
    </location>
</feature>
<feature type="active site" description="Schiff-base intermediate with DNA" evidence="2">
    <location>
        <position position="2"/>
    </location>
</feature>
<feature type="active site" description="Proton donor" evidence="2">
    <location>
        <position position="3"/>
    </location>
</feature>
<feature type="active site" description="Proton donor; for beta-elimination activity" evidence="2">
    <location>
        <position position="59"/>
    </location>
</feature>
<feature type="active site" description="Proton donor; for delta-elimination activity" evidence="2">
    <location>
        <position position="262"/>
    </location>
</feature>
<feature type="binding site" evidence="2">
    <location>
        <position position="93"/>
    </location>
    <ligand>
        <name>DNA</name>
        <dbReference type="ChEBI" id="CHEBI:16991"/>
    </ligand>
</feature>
<feature type="binding site" evidence="2">
    <location>
        <position position="112"/>
    </location>
    <ligand>
        <name>DNA</name>
        <dbReference type="ChEBI" id="CHEBI:16991"/>
    </ligand>
</feature>
<feature type="binding site" evidence="2">
    <location>
        <position position="153"/>
    </location>
    <ligand>
        <name>DNA</name>
        <dbReference type="ChEBI" id="CHEBI:16991"/>
    </ligand>
</feature>
<sequence length="275" mass="30314">MPELPEVETVARSLAPQLLSRTIVGLAKLDWPRMLTPPPPEFAALVAGRRIEAVGRRAKWLLLTLDAGWTLAIHLRMSGHLLVAEPAAADAPHVHFALDLDDGRRLIFDDQRKFGRVHLLDSTGLLALDAAHGPEPLTDDFTPAVLAERLRNRQAPIKALLLDQRLIAGIGNIYANEALWLAGIHPLTPGGTLTVDQIAALHHAIRLVLADAIANQGSSLRNYRDGYGRRGNYQEHFNVYDRVGKPCPRCQTAIERIVVAQRSTFFCPLCQVLVQ</sequence>
<reference key="1">
    <citation type="submission" date="2008-12" db="EMBL/GenBank/DDBJ databases">
        <title>Complete sequence of Chloroflexus aggregans DSM 9485.</title>
        <authorList>
            <consortium name="US DOE Joint Genome Institute"/>
            <person name="Lucas S."/>
            <person name="Copeland A."/>
            <person name="Lapidus A."/>
            <person name="Glavina del Rio T."/>
            <person name="Dalin E."/>
            <person name="Tice H."/>
            <person name="Pitluck S."/>
            <person name="Foster B."/>
            <person name="Larimer F."/>
            <person name="Land M."/>
            <person name="Hauser L."/>
            <person name="Kyrpides N."/>
            <person name="Mikhailova N."/>
            <person name="Bryant D.A."/>
            <person name="Richardson P."/>
        </authorList>
    </citation>
    <scope>NUCLEOTIDE SEQUENCE [LARGE SCALE GENOMIC DNA]</scope>
    <source>
        <strain>MD-66 / DSM 9485</strain>
    </source>
</reference>